<feature type="chain" id="PRO_1000053117" description="Large ribosomal subunit protein uL18">
    <location>
        <begin position="1"/>
        <end position="118"/>
    </location>
</feature>
<proteinExistence type="inferred from homology"/>
<reference key="1">
    <citation type="journal article" date="2010" name="J. Bacteriol.">
        <title>Genome sequence of the dioxin-mineralizing bacterium Sphingomonas wittichii RW1.</title>
        <authorList>
            <person name="Miller T.R."/>
            <person name="Delcher A.L."/>
            <person name="Salzberg S.L."/>
            <person name="Saunders E."/>
            <person name="Detter J.C."/>
            <person name="Halden R.U."/>
        </authorList>
    </citation>
    <scope>NUCLEOTIDE SEQUENCE [LARGE SCALE GENOMIC DNA]</scope>
    <source>
        <strain>DSM 6014 / CCUG 31198 / JCM 15750 / NBRC 105917 / EY 4224 / RW1</strain>
    </source>
</reference>
<evidence type="ECO:0000255" key="1">
    <source>
        <dbReference type="HAMAP-Rule" id="MF_01337"/>
    </source>
</evidence>
<evidence type="ECO:0000305" key="2"/>
<dbReference type="EMBL" id="CP000699">
    <property type="protein sequence ID" value="ABQ67702.1"/>
    <property type="molecule type" value="Genomic_DNA"/>
</dbReference>
<dbReference type="SMR" id="A5V5Y6"/>
<dbReference type="STRING" id="392499.Swit_1337"/>
<dbReference type="PaxDb" id="392499-Swit_1337"/>
<dbReference type="KEGG" id="swi:Swit_1337"/>
<dbReference type="eggNOG" id="COG0256">
    <property type="taxonomic scope" value="Bacteria"/>
</dbReference>
<dbReference type="HOGENOM" id="CLU_098841_0_1_5"/>
<dbReference type="OrthoDB" id="9810939at2"/>
<dbReference type="Proteomes" id="UP000001989">
    <property type="component" value="Chromosome"/>
</dbReference>
<dbReference type="GO" id="GO:0022625">
    <property type="term" value="C:cytosolic large ribosomal subunit"/>
    <property type="evidence" value="ECO:0007669"/>
    <property type="project" value="TreeGrafter"/>
</dbReference>
<dbReference type="GO" id="GO:0008097">
    <property type="term" value="F:5S rRNA binding"/>
    <property type="evidence" value="ECO:0007669"/>
    <property type="project" value="TreeGrafter"/>
</dbReference>
<dbReference type="GO" id="GO:0003735">
    <property type="term" value="F:structural constituent of ribosome"/>
    <property type="evidence" value="ECO:0007669"/>
    <property type="project" value="InterPro"/>
</dbReference>
<dbReference type="GO" id="GO:0006412">
    <property type="term" value="P:translation"/>
    <property type="evidence" value="ECO:0007669"/>
    <property type="project" value="UniProtKB-UniRule"/>
</dbReference>
<dbReference type="CDD" id="cd00432">
    <property type="entry name" value="Ribosomal_L18_L5e"/>
    <property type="match status" value="1"/>
</dbReference>
<dbReference type="FunFam" id="3.30.420.100:FF:000001">
    <property type="entry name" value="50S ribosomal protein L18"/>
    <property type="match status" value="1"/>
</dbReference>
<dbReference type="Gene3D" id="3.30.420.100">
    <property type="match status" value="1"/>
</dbReference>
<dbReference type="HAMAP" id="MF_01337_B">
    <property type="entry name" value="Ribosomal_uL18_B"/>
    <property type="match status" value="1"/>
</dbReference>
<dbReference type="InterPro" id="IPR004389">
    <property type="entry name" value="Ribosomal_uL18_bac-type"/>
</dbReference>
<dbReference type="InterPro" id="IPR005484">
    <property type="entry name" value="Ribosomal_uL18_bac/euk"/>
</dbReference>
<dbReference type="NCBIfam" id="TIGR00060">
    <property type="entry name" value="L18_bact"/>
    <property type="match status" value="1"/>
</dbReference>
<dbReference type="PANTHER" id="PTHR12899">
    <property type="entry name" value="39S RIBOSOMAL PROTEIN L18, MITOCHONDRIAL"/>
    <property type="match status" value="1"/>
</dbReference>
<dbReference type="PANTHER" id="PTHR12899:SF3">
    <property type="entry name" value="LARGE RIBOSOMAL SUBUNIT PROTEIN UL18M"/>
    <property type="match status" value="1"/>
</dbReference>
<dbReference type="Pfam" id="PF00861">
    <property type="entry name" value="Ribosomal_L18p"/>
    <property type="match status" value="1"/>
</dbReference>
<dbReference type="SUPFAM" id="SSF53137">
    <property type="entry name" value="Translational machinery components"/>
    <property type="match status" value="1"/>
</dbReference>
<organism>
    <name type="scientific">Rhizorhabdus wittichii (strain DSM 6014 / CCUG 31198 / JCM 15750 / NBRC 105917 / EY 4224 / RW1)</name>
    <name type="common">Sphingomonas wittichii</name>
    <dbReference type="NCBI Taxonomy" id="392499"/>
    <lineage>
        <taxon>Bacteria</taxon>
        <taxon>Pseudomonadati</taxon>
        <taxon>Pseudomonadota</taxon>
        <taxon>Alphaproteobacteria</taxon>
        <taxon>Sphingomonadales</taxon>
        <taxon>Sphingomonadaceae</taxon>
        <taxon>Rhizorhabdus</taxon>
    </lineage>
</organism>
<comment type="function">
    <text evidence="1">This is one of the proteins that bind and probably mediate the attachment of the 5S RNA into the large ribosomal subunit, where it forms part of the central protuberance.</text>
</comment>
<comment type="subunit">
    <text evidence="1">Part of the 50S ribosomal subunit; part of the 5S rRNA/L5/L18/L25 subcomplex. Contacts the 5S and 23S rRNAs.</text>
</comment>
<comment type="similarity">
    <text evidence="1">Belongs to the universal ribosomal protein uL18 family.</text>
</comment>
<name>RL18_RHIWR</name>
<sequence length="118" mass="12620">MSKGLSLFERRRRRVRTALRARGGLRPRLSVHRSGRHIYAQVIDDEAGRTVASASTLDKDMKGKTGATADAAASVGKAVAERAKAAGVTQVVFDRGGFLFHGRVKALADAAREGGLEF</sequence>
<gene>
    <name evidence="1" type="primary">rplR</name>
    <name type="ordered locus">Swit_1337</name>
</gene>
<accession>A5V5Y6</accession>
<keyword id="KW-1185">Reference proteome</keyword>
<keyword id="KW-0687">Ribonucleoprotein</keyword>
<keyword id="KW-0689">Ribosomal protein</keyword>
<keyword id="KW-0694">RNA-binding</keyword>
<keyword id="KW-0699">rRNA-binding</keyword>
<protein>
    <recommendedName>
        <fullName evidence="1">Large ribosomal subunit protein uL18</fullName>
    </recommendedName>
    <alternativeName>
        <fullName evidence="2">50S ribosomal protein L18</fullName>
    </alternativeName>
</protein>